<comment type="function">
    <text evidence="1">Binds the lower part of the 30S subunit head. Binds mRNA in the 70S ribosome, positioning it for translation.</text>
</comment>
<comment type="subunit">
    <text evidence="1">Part of the 30S ribosomal subunit. Forms a tight complex with proteins S10 and S14.</text>
</comment>
<comment type="similarity">
    <text evidence="1">Belongs to the universal ribosomal protein uS3 family.</text>
</comment>
<reference key="1">
    <citation type="journal article" date="2009" name="PLoS Genet.">
        <title>Organised genome dynamics in the Escherichia coli species results in highly diverse adaptive paths.</title>
        <authorList>
            <person name="Touchon M."/>
            <person name="Hoede C."/>
            <person name="Tenaillon O."/>
            <person name="Barbe V."/>
            <person name="Baeriswyl S."/>
            <person name="Bidet P."/>
            <person name="Bingen E."/>
            <person name="Bonacorsi S."/>
            <person name="Bouchier C."/>
            <person name="Bouvet O."/>
            <person name="Calteau A."/>
            <person name="Chiapello H."/>
            <person name="Clermont O."/>
            <person name="Cruveiller S."/>
            <person name="Danchin A."/>
            <person name="Diard M."/>
            <person name="Dossat C."/>
            <person name="Karoui M.E."/>
            <person name="Frapy E."/>
            <person name="Garry L."/>
            <person name="Ghigo J.M."/>
            <person name="Gilles A.M."/>
            <person name="Johnson J."/>
            <person name="Le Bouguenec C."/>
            <person name="Lescat M."/>
            <person name="Mangenot S."/>
            <person name="Martinez-Jehanne V."/>
            <person name="Matic I."/>
            <person name="Nassif X."/>
            <person name="Oztas S."/>
            <person name="Petit M.A."/>
            <person name="Pichon C."/>
            <person name="Rouy Z."/>
            <person name="Ruf C.S."/>
            <person name="Schneider D."/>
            <person name="Tourret J."/>
            <person name="Vacherie B."/>
            <person name="Vallenet D."/>
            <person name="Medigue C."/>
            <person name="Rocha E.P.C."/>
            <person name="Denamur E."/>
        </authorList>
    </citation>
    <scope>NUCLEOTIDE SEQUENCE [LARGE SCALE GENOMIC DNA]</scope>
    <source>
        <strain>IAI39 / ExPEC</strain>
    </source>
</reference>
<protein>
    <recommendedName>
        <fullName evidence="1">Small ribosomal subunit protein uS3</fullName>
    </recommendedName>
    <alternativeName>
        <fullName evidence="2">30S ribosomal protein S3</fullName>
    </alternativeName>
</protein>
<accession>B7NLN3</accession>
<keyword id="KW-0687">Ribonucleoprotein</keyword>
<keyword id="KW-0689">Ribosomal protein</keyword>
<keyword id="KW-0694">RNA-binding</keyword>
<keyword id="KW-0699">rRNA-binding</keyword>
<sequence length="233" mass="25983">MGQKVHPNGIRLGIVKPWNSTWFANTKEFADNLDSDFKVRQYLTKELAKASVSRIVIERPAKSIRVTIHTARPGIVIGKKGEDVEKLRKVVADIAGVPAQINIAEVRKPELDAKLVADSITSQLERRVMFRRAMKRAVQNAMRLGAKGIKVEVSGRLGGAEIARTEWYREGRVPLHTLRADIDYNTSEAHTTYGVIGVKVWIFKGEILGGMAAVEQPEKPAAQPKKQQRKGRK</sequence>
<dbReference type="EMBL" id="CU928164">
    <property type="protein sequence ID" value="CAR19922.1"/>
    <property type="molecule type" value="Genomic_DNA"/>
</dbReference>
<dbReference type="RefSeq" id="WP_000529945.1">
    <property type="nucleotide sequence ID" value="NC_011750.1"/>
</dbReference>
<dbReference type="RefSeq" id="YP_002409705.1">
    <property type="nucleotide sequence ID" value="NC_011750.1"/>
</dbReference>
<dbReference type="SMR" id="B7NLN3"/>
<dbReference type="STRING" id="585057.ECIAI39_3808"/>
<dbReference type="GeneID" id="97603663"/>
<dbReference type="KEGG" id="ect:ECIAI39_3808"/>
<dbReference type="PATRIC" id="fig|585057.6.peg.3945"/>
<dbReference type="HOGENOM" id="CLU_058591_0_2_6"/>
<dbReference type="PRO" id="PR:B7NLN3"/>
<dbReference type="Proteomes" id="UP000000749">
    <property type="component" value="Chromosome"/>
</dbReference>
<dbReference type="GO" id="GO:0022627">
    <property type="term" value="C:cytosolic small ribosomal subunit"/>
    <property type="evidence" value="ECO:0007669"/>
    <property type="project" value="TreeGrafter"/>
</dbReference>
<dbReference type="GO" id="GO:0003729">
    <property type="term" value="F:mRNA binding"/>
    <property type="evidence" value="ECO:0007669"/>
    <property type="project" value="UniProtKB-UniRule"/>
</dbReference>
<dbReference type="GO" id="GO:0019843">
    <property type="term" value="F:rRNA binding"/>
    <property type="evidence" value="ECO:0007669"/>
    <property type="project" value="UniProtKB-UniRule"/>
</dbReference>
<dbReference type="GO" id="GO:0003735">
    <property type="term" value="F:structural constituent of ribosome"/>
    <property type="evidence" value="ECO:0007669"/>
    <property type="project" value="InterPro"/>
</dbReference>
<dbReference type="GO" id="GO:0006412">
    <property type="term" value="P:translation"/>
    <property type="evidence" value="ECO:0007669"/>
    <property type="project" value="UniProtKB-UniRule"/>
</dbReference>
<dbReference type="CDD" id="cd02412">
    <property type="entry name" value="KH-II_30S_S3"/>
    <property type="match status" value="1"/>
</dbReference>
<dbReference type="FunFam" id="3.30.1140.32:FF:000001">
    <property type="entry name" value="30S ribosomal protein S3"/>
    <property type="match status" value="1"/>
</dbReference>
<dbReference type="FunFam" id="3.30.300.20:FF:000001">
    <property type="entry name" value="30S ribosomal protein S3"/>
    <property type="match status" value="1"/>
</dbReference>
<dbReference type="Gene3D" id="3.30.300.20">
    <property type="match status" value="1"/>
</dbReference>
<dbReference type="Gene3D" id="3.30.1140.32">
    <property type="entry name" value="Ribosomal protein S3, C-terminal domain"/>
    <property type="match status" value="1"/>
</dbReference>
<dbReference type="HAMAP" id="MF_01309_B">
    <property type="entry name" value="Ribosomal_uS3_B"/>
    <property type="match status" value="1"/>
</dbReference>
<dbReference type="InterPro" id="IPR004087">
    <property type="entry name" value="KH_dom"/>
</dbReference>
<dbReference type="InterPro" id="IPR015946">
    <property type="entry name" value="KH_dom-like_a/b"/>
</dbReference>
<dbReference type="InterPro" id="IPR004044">
    <property type="entry name" value="KH_dom_type_2"/>
</dbReference>
<dbReference type="InterPro" id="IPR009019">
    <property type="entry name" value="KH_sf_prok-type"/>
</dbReference>
<dbReference type="InterPro" id="IPR036419">
    <property type="entry name" value="Ribosomal_S3_C_sf"/>
</dbReference>
<dbReference type="InterPro" id="IPR005704">
    <property type="entry name" value="Ribosomal_uS3_bac-typ"/>
</dbReference>
<dbReference type="InterPro" id="IPR001351">
    <property type="entry name" value="Ribosomal_uS3_C"/>
</dbReference>
<dbReference type="InterPro" id="IPR018280">
    <property type="entry name" value="Ribosomal_uS3_CS"/>
</dbReference>
<dbReference type="NCBIfam" id="TIGR01009">
    <property type="entry name" value="rpsC_bact"/>
    <property type="match status" value="1"/>
</dbReference>
<dbReference type="PANTHER" id="PTHR11760">
    <property type="entry name" value="30S/40S RIBOSOMAL PROTEIN S3"/>
    <property type="match status" value="1"/>
</dbReference>
<dbReference type="PANTHER" id="PTHR11760:SF19">
    <property type="entry name" value="SMALL RIBOSOMAL SUBUNIT PROTEIN US3C"/>
    <property type="match status" value="1"/>
</dbReference>
<dbReference type="Pfam" id="PF07650">
    <property type="entry name" value="KH_2"/>
    <property type="match status" value="1"/>
</dbReference>
<dbReference type="Pfam" id="PF00189">
    <property type="entry name" value="Ribosomal_S3_C"/>
    <property type="match status" value="1"/>
</dbReference>
<dbReference type="SMART" id="SM00322">
    <property type="entry name" value="KH"/>
    <property type="match status" value="1"/>
</dbReference>
<dbReference type="SUPFAM" id="SSF54814">
    <property type="entry name" value="Prokaryotic type KH domain (KH-domain type II)"/>
    <property type="match status" value="1"/>
</dbReference>
<dbReference type="SUPFAM" id="SSF54821">
    <property type="entry name" value="Ribosomal protein S3 C-terminal domain"/>
    <property type="match status" value="1"/>
</dbReference>
<dbReference type="PROSITE" id="PS50823">
    <property type="entry name" value="KH_TYPE_2"/>
    <property type="match status" value="1"/>
</dbReference>
<dbReference type="PROSITE" id="PS00548">
    <property type="entry name" value="RIBOSOMAL_S3"/>
    <property type="match status" value="1"/>
</dbReference>
<gene>
    <name evidence="1" type="primary">rpsC</name>
    <name type="ordered locus">ECIAI39_3808</name>
</gene>
<evidence type="ECO:0000255" key="1">
    <source>
        <dbReference type="HAMAP-Rule" id="MF_01309"/>
    </source>
</evidence>
<evidence type="ECO:0000305" key="2"/>
<name>RS3_ECO7I</name>
<organism>
    <name type="scientific">Escherichia coli O7:K1 (strain IAI39 / ExPEC)</name>
    <dbReference type="NCBI Taxonomy" id="585057"/>
    <lineage>
        <taxon>Bacteria</taxon>
        <taxon>Pseudomonadati</taxon>
        <taxon>Pseudomonadota</taxon>
        <taxon>Gammaproteobacteria</taxon>
        <taxon>Enterobacterales</taxon>
        <taxon>Enterobacteriaceae</taxon>
        <taxon>Escherichia</taxon>
    </lineage>
</organism>
<proteinExistence type="inferred from homology"/>
<feature type="chain" id="PRO_1000140962" description="Small ribosomal subunit protein uS3">
    <location>
        <begin position="1"/>
        <end position="233"/>
    </location>
</feature>
<feature type="domain" description="KH type-2" evidence="1">
    <location>
        <begin position="39"/>
        <end position="107"/>
    </location>
</feature>